<gene>
    <name evidence="1" type="primary">ghrB</name>
    <name type="ordered locus">SF3587</name>
    <name type="ordered locus">S4182</name>
</gene>
<proteinExistence type="inferred from homology"/>
<feature type="chain" id="PRO_0000348402" description="Glyoxylate/hydroxypyruvate reductase B">
    <location>
        <begin position="1"/>
        <end position="324"/>
    </location>
</feature>
<feature type="active site" evidence="1">
    <location>
        <position position="237"/>
    </location>
</feature>
<feature type="active site" evidence="1">
    <location>
        <position position="266"/>
    </location>
</feature>
<feature type="active site" description="Proton donor" evidence="1">
    <location>
        <position position="285"/>
    </location>
</feature>
<name>GHRB_SHIFL</name>
<protein>
    <recommendedName>
        <fullName evidence="1">Glyoxylate/hydroxypyruvate reductase B</fullName>
        <ecNumber evidence="1">1.1.1.79</ecNumber>
        <ecNumber evidence="1">1.1.1.81</ecNumber>
    </recommendedName>
</protein>
<comment type="function">
    <text evidence="1">Catalyzes the NADPH-dependent reduction of glyoxylate and hydroxypyruvate into glycolate and glycerate, respectively.</text>
</comment>
<comment type="catalytic activity">
    <reaction evidence="1">
        <text>glycolate + NADP(+) = glyoxylate + NADPH + H(+)</text>
        <dbReference type="Rhea" id="RHEA:10992"/>
        <dbReference type="ChEBI" id="CHEBI:15378"/>
        <dbReference type="ChEBI" id="CHEBI:29805"/>
        <dbReference type="ChEBI" id="CHEBI:36655"/>
        <dbReference type="ChEBI" id="CHEBI:57783"/>
        <dbReference type="ChEBI" id="CHEBI:58349"/>
        <dbReference type="EC" id="1.1.1.79"/>
    </reaction>
</comment>
<comment type="catalytic activity">
    <reaction evidence="1">
        <text>(R)-glycerate + NAD(+) = 3-hydroxypyruvate + NADH + H(+)</text>
        <dbReference type="Rhea" id="RHEA:17905"/>
        <dbReference type="ChEBI" id="CHEBI:15378"/>
        <dbReference type="ChEBI" id="CHEBI:16659"/>
        <dbReference type="ChEBI" id="CHEBI:17180"/>
        <dbReference type="ChEBI" id="CHEBI:57540"/>
        <dbReference type="ChEBI" id="CHEBI:57945"/>
        <dbReference type="EC" id="1.1.1.81"/>
    </reaction>
</comment>
<comment type="catalytic activity">
    <reaction evidence="1">
        <text>(R)-glycerate + NADP(+) = 3-hydroxypyruvate + NADPH + H(+)</text>
        <dbReference type="Rhea" id="RHEA:18657"/>
        <dbReference type="ChEBI" id="CHEBI:15378"/>
        <dbReference type="ChEBI" id="CHEBI:16659"/>
        <dbReference type="ChEBI" id="CHEBI:17180"/>
        <dbReference type="ChEBI" id="CHEBI:57783"/>
        <dbReference type="ChEBI" id="CHEBI:58349"/>
        <dbReference type="EC" id="1.1.1.81"/>
    </reaction>
</comment>
<comment type="subunit">
    <text evidence="1">Homodimer.</text>
</comment>
<comment type="subcellular location">
    <subcellularLocation>
        <location evidence="1">Cytoplasm</location>
    </subcellularLocation>
</comment>
<comment type="similarity">
    <text evidence="1">Belongs to the D-isomer specific 2-hydroxyacid dehydrogenase family. GhrB subfamily.</text>
</comment>
<organism>
    <name type="scientific">Shigella flexneri</name>
    <dbReference type="NCBI Taxonomy" id="623"/>
    <lineage>
        <taxon>Bacteria</taxon>
        <taxon>Pseudomonadati</taxon>
        <taxon>Pseudomonadota</taxon>
        <taxon>Gammaproteobacteria</taxon>
        <taxon>Enterobacterales</taxon>
        <taxon>Enterobacteriaceae</taxon>
        <taxon>Shigella</taxon>
    </lineage>
</organism>
<evidence type="ECO:0000255" key="1">
    <source>
        <dbReference type="HAMAP-Rule" id="MF_01667"/>
    </source>
</evidence>
<reference key="1">
    <citation type="journal article" date="2002" name="Nucleic Acids Res.">
        <title>Genome sequence of Shigella flexneri 2a: insights into pathogenicity through comparison with genomes of Escherichia coli K12 and O157.</title>
        <authorList>
            <person name="Jin Q."/>
            <person name="Yuan Z."/>
            <person name="Xu J."/>
            <person name="Wang Y."/>
            <person name="Shen Y."/>
            <person name="Lu W."/>
            <person name="Wang J."/>
            <person name="Liu H."/>
            <person name="Yang J."/>
            <person name="Yang F."/>
            <person name="Zhang X."/>
            <person name="Zhang J."/>
            <person name="Yang G."/>
            <person name="Wu H."/>
            <person name="Qu D."/>
            <person name="Dong J."/>
            <person name="Sun L."/>
            <person name="Xue Y."/>
            <person name="Zhao A."/>
            <person name="Gao Y."/>
            <person name="Zhu J."/>
            <person name="Kan B."/>
            <person name="Ding K."/>
            <person name="Chen S."/>
            <person name="Cheng H."/>
            <person name="Yao Z."/>
            <person name="He B."/>
            <person name="Chen R."/>
            <person name="Ma D."/>
            <person name="Qiang B."/>
            <person name="Wen Y."/>
            <person name="Hou Y."/>
            <person name="Yu J."/>
        </authorList>
    </citation>
    <scope>NUCLEOTIDE SEQUENCE [LARGE SCALE GENOMIC DNA]</scope>
    <source>
        <strain>301 / Serotype 2a</strain>
    </source>
</reference>
<reference key="2">
    <citation type="journal article" date="2003" name="Infect. Immun.">
        <title>Complete genome sequence and comparative genomics of Shigella flexneri serotype 2a strain 2457T.</title>
        <authorList>
            <person name="Wei J."/>
            <person name="Goldberg M.B."/>
            <person name="Burland V."/>
            <person name="Venkatesan M.M."/>
            <person name="Deng W."/>
            <person name="Fournier G."/>
            <person name="Mayhew G.F."/>
            <person name="Plunkett G. III"/>
            <person name="Rose D.J."/>
            <person name="Darling A."/>
            <person name="Mau B."/>
            <person name="Perna N.T."/>
            <person name="Payne S.M."/>
            <person name="Runyen-Janecky L.J."/>
            <person name="Zhou S."/>
            <person name="Schwartz D.C."/>
            <person name="Blattner F.R."/>
        </authorList>
    </citation>
    <scope>NUCLEOTIDE SEQUENCE [LARGE SCALE GENOMIC DNA]</scope>
    <source>
        <strain>ATCC 700930 / 2457T / Serotype 2a</strain>
    </source>
</reference>
<sequence>MKPSVILYKALPDDLLQRLQAHFTVHQVANLSPQTVVQNAAIFAEAEGLLGSNENVDAALLEKMPKLRATSTISVGYDNFDVDALTARKILLMHTPTVLTETVADTLMALVLSTARRVVEVAERVKAGEWTASIGPDWYGTDVHHKTLGIVGMGRIGMALAQRVHFGFNMPILYNARRHHKEAEERFNARYCDLDTLLQESDFVCLILPLTDETHHLFGAEQFAKMKSSAIFINAGRGPVVDENALIAALQKGEIHAAGLDVFEQEPLSVDSPLLSMANVVAVPHIGSATHETRYGMAACAVDNLIDALQGKVEKNCVNPHVAD</sequence>
<keyword id="KW-0963">Cytoplasm</keyword>
<keyword id="KW-0520">NAD</keyword>
<keyword id="KW-0521">NADP</keyword>
<keyword id="KW-0560">Oxidoreductase</keyword>
<keyword id="KW-1185">Reference proteome</keyword>
<dbReference type="EC" id="1.1.1.79" evidence="1"/>
<dbReference type="EC" id="1.1.1.81" evidence="1"/>
<dbReference type="EMBL" id="AE005674">
    <property type="protein sequence ID" value="AAN45038.2"/>
    <property type="molecule type" value="Genomic_DNA"/>
</dbReference>
<dbReference type="EMBL" id="AE014073">
    <property type="protein sequence ID" value="AAP19150.1"/>
    <property type="molecule type" value="Genomic_DNA"/>
</dbReference>
<dbReference type="RefSeq" id="WP_000804996.1">
    <property type="nucleotide sequence ID" value="NZ_WPGW01000020.1"/>
</dbReference>
<dbReference type="SMR" id="Q83PR3"/>
<dbReference type="STRING" id="198214.SF3587"/>
<dbReference type="PaxDb" id="198214-SF3587"/>
<dbReference type="KEGG" id="sfl:SF3587"/>
<dbReference type="KEGG" id="sfx:S4182"/>
<dbReference type="PATRIC" id="fig|198214.7.peg.4232"/>
<dbReference type="HOGENOM" id="CLU_019796_1_2_6"/>
<dbReference type="Proteomes" id="UP000001006">
    <property type="component" value="Chromosome"/>
</dbReference>
<dbReference type="Proteomes" id="UP000002673">
    <property type="component" value="Chromosome"/>
</dbReference>
<dbReference type="GO" id="GO:0005829">
    <property type="term" value="C:cytosol"/>
    <property type="evidence" value="ECO:0007669"/>
    <property type="project" value="TreeGrafter"/>
</dbReference>
<dbReference type="GO" id="GO:0005886">
    <property type="term" value="C:plasma membrane"/>
    <property type="evidence" value="ECO:0007669"/>
    <property type="project" value="UniProtKB-UniRule"/>
</dbReference>
<dbReference type="GO" id="GO:0030267">
    <property type="term" value="F:glyoxylate reductase (NADPH) activity"/>
    <property type="evidence" value="ECO:0007669"/>
    <property type="project" value="UniProtKB-UniRule"/>
</dbReference>
<dbReference type="GO" id="GO:0008465">
    <property type="term" value="F:hydroxypyruvate reductase (NADH) activity"/>
    <property type="evidence" value="ECO:0007669"/>
    <property type="project" value="RHEA"/>
</dbReference>
<dbReference type="GO" id="GO:0120509">
    <property type="term" value="F:hydroxypyruvate reductase (NADPH) activity"/>
    <property type="evidence" value="ECO:0007669"/>
    <property type="project" value="RHEA"/>
</dbReference>
<dbReference type="GO" id="GO:0051287">
    <property type="term" value="F:NAD binding"/>
    <property type="evidence" value="ECO:0007669"/>
    <property type="project" value="InterPro"/>
</dbReference>
<dbReference type="CDD" id="cd05301">
    <property type="entry name" value="GDH"/>
    <property type="match status" value="1"/>
</dbReference>
<dbReference type="FunFam" id="3.40.50.720:FF:000026">
    <property type="entry name" value="Glyoxylate/hydroxypyruvate reductase B"/>
    <property type="match status" value="1"/>
</dbReference>
<dbReference type="Gene3D" id="3.40.50.720">
    <property type="entry name" value="NAD(P)-binding Rossmann-like Domain"/>
    <property type="match status" value="2"/>
</dbReference>
<dbReference type="HAMAP" id="MF_01667">
    <property type="entry name" value="2_Hacid_dh_C_GhrB"/>
    <property type="match status" value="1"/>
</dbReference>
<dbReference type="InterPro" id="IPR050223">
    <property type="entry name" value="D-isomer_2-hydroxyacid_DH"/>
</dbReference>
<dbReference type="InterPro" id="IPR006139">
    <property type="entry name" value="D-isomer_2_OHA_DH_cat_dom"/>
</dbReference>
<dbReference type="InterPro" id="IPR029753">
    <property type="entry name" value="D-isomer_DH_CS"/>
</dbReference>
<dbReference type="InterPro" id="IPR006140">
    <property type="entry name" value="D-isomer_DH_NAD-bd"/>
</dbReference>
<dbReference type="InterPro" id="IPR023756">
    <property type="entry name" value="Glyo/OHPyrv_Rdtase_B"/>
</dbReference>
<dbReference type="InterPro" id="IPR036291">
    <property type="entry name" value="NAD(P)-bd_dom_sf"/>
</dbReference>
<dbReference type="NCBIfam" id="NF011938">
    <property type="entry name" value="PRK15409.1"/>
    <property type="match status" value="1"/>
</dbReference>
<dbReference type="PANTHER" id="PTHR10996">
    <property type="entry name" value="2-HYDROXYACID DEHYDROGENASE-RELATED"/>
    <property type="match status" value="1"/>
</dbReference>
<dbReference type="PANTHER" id="PTHR10996:SF283">
    <property type="entry name" value="GLYOXYLATE_HYDROXYPYRUVATE REDUCTASE B"/>
    <property type="match status" value="1"/>
</dbReference>
<dbReference type="Pfam" id="PF00389">
    <property type="entry name" value="2-Hacid_dh"/>
    <property type="match status" value="1"/>
</dbReference>
<dbReference type="Pfam" id="PF02826">
    <property type="entry name" value="2-Hacid_dh_C"/>
    <property type="match status" value="1"/>
</dbReference>
<dbReference type="SUPFAM" id="SSF52283">
    <property type="entry name" value="Formate/glycerate dehydrogenase catalytic domain-like"/>
    <property type="match status" value="1"/>
</dbReference>
<dbReference type="SUPFAM" id="SSF51735">
    <property type="entry name" value="NAD(P)-binding Rossmann-fold domains"/>
    <property type="match status" value="1"/>
</dbReference>
<dbReference type="PROSITE" id="PS00670">
    <property type="entry name" value="D_2_HYDROXYACID_DH_2"/>
    <property type="match status" value="1"/>
</dbReference>
<dbReference type="PROSITE" id="PS00671">
    <property type="entry name" value="D_2_HYDROXYACID_DH_3"/>
    <property type="match status" value="1"/>
</dbReference>
<accession>Q83PR3</accession>
<accession>Q7UAX8</accession>